<evidence type="ECO:0000255" key="1">
    <source>
        <dbReference type="HAMAP-Rule" id="MF_00071"/>
    </source>
</evidence>
<accession>Q2IIA6</accession>
<sequence length="601" mass="67227">MAEKNSHIRNFSIIAHIDHGKSTLADRLLEHTGTVTKREAQAQFLDNMELERERGITIKAQTVRMKYRAQDGRDYELNLIDTPGHVDFAYEVSRSMAACEGAILVVDATQGVEAQTLANVYQALDHDLEIVPVINKIDLPSADVEGVRQEIEEVIGLDAKDAVPASAKEGIGIGEILEQIVHRVPPPEGDPEAPLKAIVFDSWYDSYRGVVMLVRVFEGTVRPKQKIRLWSNRKEFEVQELGIFAPFAKAVGELQAGEVGVVVANVKDVHDAKVGDTITDAARPTEAPFPGFKVVKPMVFSGVFPIEAADYEQLRDALEKLSLNDSAFTYEPETSQALGFGFRCGYLGLLHMEIVQERLEREYQLALITTAPSVVYRVTDTTGAVEEIDNPAKLPPVQKIAKLEEPHLTCHIHARTEDVGAILKLCQERRGLQRDLKYLGTKRVQITYDIPLAEVVFDFFDKLKSVSRGYASLDYELKGYEEADLVKLDILINGEPVDALSVIVHRERAYQRGRDLCQRLREVIPKQMYEVAIQAAIGAKVIARETVKAFRKNVLAKCYGGDISRKRKLLEKQKEGKKRMKQVGSVEIPQEAFLAVLKVEE</sequence>
<organism>
    <name type="scientific">Anaeromyxobacter dehalogenans (strain 2CP-C)</name>
    <dbReference type="NCBI Taxonomy" id="290397"/>
    <lineage>
        <taxon>Bacteria</taxon>
        <taxon>Pseudomonadati</taxon>
        <taxon>Myxococcota</taxon>
        <taxon>Myxococcia</taxon>
        <taxon>Myxococcales</taxon>
        <taxon>Cystobacterineae</taxon>
        <taxon>Anaeromyxobacteraceae</taxon>
        <taxon>Anaeromyxobacter</taxon>
    </lineage>
</organism>
<feature type="chain" id="PRO_0000265636" description="Elongation factor 4">
    <location>
        <begin position="1"/>
        <end position="601"/>
    </location>
</feature>
<feature type="domain" description="tr-type G">
    <location>
        <begin position="6"/>
        <end position="188"/>
    </location>
</feature>
<feature type="binding site" evidence="1">
    <location>
        <begin position="18"/>
        <end position="23"/>
    </location>
    <ligand>
        <name>GTP</name>
        <dbReference type="ChEBI" id="CHEBI:37565"/>
    </ligand>
</feature>
<feature type="binding site" evidence="1">
    <location>
        <begin position="135"/>
        <end position="138"/>
    </location>
    <ligand>
        <name>GTP</name>
        <dbReference type="ChEBI" id="CHEBI:37565"/>
    </ligand>
</feature>
<gene>
    <name evidence="1" type="primary">lepA</name>
    <name type="ordered locus">Adeh_1614</name>
</gene>
<comment type="function">
    <text evidence="1">Required for accurate and efficient protein synthesis under certain stress conditions. May act as a fidelity factor of the translation reaction, by catalyzing a one-codon backward translocation of tRNAs on improperly translocated ribosomes. Back-translocation proceeds from a post-translocation (POST) complex to a pre-translocation (PRE) complex, thus giving elongation factor G a second chance to translocate the tRNAs correctly. Binds to ribosomes in a GTP-dependent manner.</text>
</comment>
<comment type="catalytic activity">
    <reaction evidence="1">
        <text>GTP + H2O = GDP + phosphate + H(+)</text>
        <dbReference type="Rhea" id="RHEA:19669"/>
        <dbReference type="ChEBI" id="CHEBI:15377"/>
        <dbReference type="ChEBI" id="CHEBI:15378"/>
        <dbReference type="ChEBI" id="CHEBI:37565"/>
        <dbReference type="ChEBI" id="CHEBI:43474"/>
        <dbReference type="ChEBI" id="CHEBI:58189"/>
        <dbReference type="EC" id="3.6.5.n1"/>
    </reaction>
</comment>
<comment type="subcellular location">
    <subcellularLocation>
        <location evidence="1">Cell inner membrane</location>
        <topology evidence="1">Peripheral membrane protein</topology>
        <orientation evidence="1">Cytoplasmic side</orientation>
    </subcellularLocation>
</comment>
<comment type="similarity">
    <text evidence="1">Belongs to the TRAFAC class translation factor GTPase superfamily. Classic translation factor GTPase family. LepA subfamily.</text>
</comment>
<name>LEPA_ANADE</name>
<keyword id="KW-0997">Cell inner membrane</keyword>
<keyword id="KW-1003">Cell membrane</keyword>
<keyword id="KW-0342">GTP-binding</keyword>
<keyword id="KW-0378">Hydrolase</keyword>
<keyword id="KW-0472">Membrane</keyword>
<keyword id="KW-0547">Nucleotide-binding</keyword>
<keyword id="KW-0648">Protein biosynthesis</keyword>
<keyword id="KW-1185">Reference proteome</keyword>
<dbReference type="EC" id="3.6.5.n1" evidence="1"/>
<dbReference type="EMBL" id="CP000251">
    <property type="protein sequence ID" value="ABC81387.1"/>
    <property type="molecule type" value="Genomic_DNA"/>
</dbReference>
<dbReference type="RefSeq" id="WP_011420670.1">
    <property type="nucleotide sequence ID" value="NC_007760.1"/>
</dbReference>
<dbReference type="SMR" id="Q2IIA6"/>
<dbReference type="STRING" id="290397.Adeh_1614"/>
<dbReference type="KEGG" id="ade:Adeh_1614"/>
<dbReference type="eggNOG" id="COG0481">
    <property type="taxonomic scope" value="Bacteria"/>
</dbReference>
<dbReference type="HOGENOM" id="CLU_009995_3_3_7"/>
<dbReference type="OrthoDB" id="9760518at2"/>
<dbReference type="Proteomes" id="UP000001935">
    <property type="component" value="Chromosome"/>
</dbReference>
<dbReference type="GO" id="GO:0005886">
    <property type="term" value="C:plasma membrane"/>
    <property type="evidence" value="ECO:0007669"/>
    <property type="project" value="UniProtKB-SubCell"/>
</dbReference>
<dbReference type="GO" id="GO:0005525">
    <property type="term" value="F:GTP binding"/>
    <property type="evidence" value="ECO:0007669"/>
    <property type="project" value="UniProtKB-UniRule"/>
</dbReference>
<dbReference type="GO" id="GO:0003924">
    <property type="term" value="F:GTPase activity"/>
    <property type="evidence" value="ECO:0007669"/>
    <property type="project" value="UniProtKB-UniRule"/>
</dbReference>
<dbReference type="GO" id="GO:0043022">
    <property type="term" value="F:ribosome binding"/>
    <property type="evidence" value="ECO:0007669"/>
    <property type="project" value="UniProtKB-UniRule"/>
</dbReference>
<dbReference type="GO" id="GO:0003746">
    <property type="term" value="F:translation elongation factor activity"/>
    <property type="evidence" value="ECO:0007669"/>
    <property type="project" value="UniProtKB-UniRule"/>
</dbReference>
<dbReference type="GO" id="GO:0045727">
    <property type="term" value="P:positive regulation of translation"/>
    <property type="evidence" value="ECO:0007669"/>
    <property type="project" value="UniProtKB-UniRule"/>
</dbReference>
<dbReference type="CDD" id="cd03699">
    <property type="entry name" value="EF4_II"/>
    <property type="match status" value="1"/>
</dbReference>
<dbReference type="CDD" id="cd16260">
    <property type="entry name" value="EF4_III"/>
    <property type="match status" value="1"/>
</dbReference>
<dbReference type="CDD" id="cd01890">
    <property type="entry name" value="LepA"/>
    <property type="match status" value="1"/>
</dbReference>
<dbReference type="CDD" id="cd03709">
    <property type="entry name" value="lepA_C"/>
    <property type="match status" value="1"/>
</dbReference>
<dbReference type="FunFam" id="3.40.50.300:FF:000078">
    <property type="entry name" value="Elongation factor 4"/>
    <property type="match status" value="1"/>
</dbReference>
<dbReference type="FunFam" id="2.40.30.10:FF:000015">
    <property type="entry name" value="Translation factor GUF1, mitochondrial"/>
    <property type="match status" value="1"/>
</dbReference>
<dbReference type="FunFam" id="3.30.70.240:FF:000007">
    <property type="entry name" value="Translation factor GUF1, mitochondrial"/>
    <property type="match status" value="1"/>
</dbReference>
<dbReference type="FunFam" id="3.30.70.2570:FF:000001">
    <property type="entry name" value="Translation factor GUF1, mitochondrial"/>
    <property type="match status" value="1"/>
</dbReference>
<dbReference type="FunFam" id="3.30.70.870:FF:000004">
    <property type="entry name" value="Translation factor GUF1, mitochondrial"/>
    <property type="match status" value="1"/>
</dbReference>
<dbReference type="Gene3D" id="3.30.70.240">
    <property type="match status" value="1"/>
</dbReference>
<dbReference type="Gene3D" id="3.30.70.2570">
    <property type="entry name" value="Elongation factor 4, C-terminal domain"/>
    <property type="match status" value="1"/>
</dbReference>
<dbReference type="Gene3D" id="3.30.70.870">
    <property type="entry name" value="Elongation Factor G (Translational Gtpase), domain 3"/>
    <property type="match status" value="1"/>
</dbReference>
<dbReference type="Gene3D" id="3.40.50.300">
    <property type="entry name" value="P-loop containing nucleotide triphosphate hydrolases"/>
    <property type="match status" value="1"/>
</dbReference>
<dbReference type="Gene3D" id="2.40.30.10">
    <property type="entry name" value="Translation factors"/>
    <property type="match status" value="1"/>
</dbReference>
<dbReference type="HAMAP" id="MF_00071">
    <property type="entry name" value="LepA"/>
    <property type="match status" value="1"/>
</dbReference>
<dbReference type="InterPro" id="IPR006297">
    <property type="entry name" value="EF-4"/>
</dbReference>
<dbReference type="InterPro" id="IPR035647">
    <property type="entry name" value="EFG_III/V"/>
</dbReference>
<dbReference type="InterPro" id="IPR000640">
    <property type="entry name" value="EFG_V-like"/>
</dbReference>
<dbReference type="InterPro" id="IPR004161">
    <property type="entry name" value="EFTu-like_2"/>
</dbReference>
<dbReference type="InterPro" id="IPR031157">
    <property type="entry name" value="G_TR_CS"/>
</dbReference>
<dbReference type="InterPro" id="IPR038363">
    <property type="entry name" value="LepA_C_sf"/>
</dbReference>
<dbReference type="InterPro" id="IPR013842">
    <property type="entry name" value="LepA_CTD"/>
</dbReference>
<dbReference type="InterPro" id="IPR035654">
    <property type="entry name" value="LepA_IV"/>
</dbReference>
<dbReference type="InterPro" id="IPR027417">
    <property type="entry name" value="P-loop_NTPase"/>
</dbReference>
<dbReference type="InterPro" id="IPR005225">
    <property type="entry name" value="Small_GTP-bd"/>
</dbReference>
<dbReference type="InterPro" id="IPR000795">
    <property type="entry name" value="T_Tr_GTP-bd_dom"/>
</dbReference>
<dbReference type="InterPro" id="IPR009000">
    <property type="entry name" value="Transl_B-barrel_sf"/>
</dbReference>
<dbReference type="NCBIfam" id="TIGR01393">
    <property type="entry name" value="lepA"/>
    <property type="match status" value="1"/>
</dbReference>
<dbReference type="NCBIfam" id="TIGR00231">
    <property type="entry name" value="small_GTP"/>
    <property type="match status" value="1"/>
</dbReference>
<dbReference type="PANTHER" id="PTHR43512:SF4">
    <property type="entry name" value="TRANSLATION FACTOR GUF1 HOMOLOG, CHLOROPLASTIC"/>
    <property type="match status" value="1"/>
</dbReference>
<dbReference type="PANTHER" id="PTHR43512">
    <property type="entry name" value="TRANSLATION FACTOR GUF1-RELATED"/>
    <property type="match status" value="1"/>
</dbReference>
<dbReference type="Pfam" id="PF00679">
    <property type="entry name" value="EFG_C"/>
    <property type="match status" value="1"/>
</dbReference>
<dbReference type="Pfam" id="PF00009">
    <property type="entry name" value="GTP_EFTU"/>
    <property type="match status" value="1"/>
</dbReference>
<dbReference type="Pfam" id="PF03144">
    <property type="entry name" value="GTP_EFTU_D2"/>
    <property type="match status" value="1"/>
</dbReference>
<dbReference type="Pfam" id="PF06421">
    <property type="entry name" value="LepA_C"/>
    <property type="match status" value="1"/>
</dbReference>
<dbReference type="PRINTS" id="PR00315">
    <property type="entry name" value="ELONGATNFCT"/>
</dbReference>
<dbReference type="SUPFAM" id="SSF54980">
    <property type="entry name" value="EF-G C-terminal domain-like"/>
    <property type="match status" value="2"/>
</dbReference>
<dbReference type="SUPFAM" id="SSF52540">
    <property type="entry name" value="P-loop containing nucleoside triphosphate hydrolases"/>
    <property type="match status" value="1"/>
</dbReference>
<dbReference type="SUPFAM" id="SSF50447">
    <property type="entry name" value="Translation proteins"/>
    <property type="match status" value="1"/>
</dbReference>
<dbReference type="PROSITE" id="PS00301">
    <property type="entry name" value="G_TR_1"/>
    <property type="match status" value="1"/>
</dbReference>
<dbReference type="PROSITE" id="PS51722">
    <property type="entry name" value="G_TR_2"/>
    <property type="match status" value="1"/>
</dbReference>
<protein>
    <recommendedName>
        <fullName evidence="1">Elongation factor 4</fullName>
        <shortName evidence="1">EF-4</shortName>
        <ecNumber evidence="1">3.6.5.n1</ecNumber>
    </recommendedName>
    <alternativeName>
        <fullName evidence="1">Ribosomal back-translocase LepA</fullName>
    </alternativeName>
</protein>
<reference key="1">
    <citation type="submission" date="2006-01" db="EMBL/GenBank/DDBJ databases">
        <title>Complete sequence of Anaeromyxobacter dehalogenans 2CP-C.</title>
        <authorList>
            <person name="Copeland A."/>
            <person name="Lucas S."/>
            <person name="Lapidus A."/>
            <person name="Barry K."/>
            <person name="Detter J.C."/>
            <person name="Glavina T."/>
            <person name="Hammon N."/>
            <person name="Israni S."/>
            <person name="Pitluck S."/>
            <person name="Brettin T."/>
            <person name="Bruce D."/>
            <person name="Han C."/>
            <person name="Tapia R."/>
            <person name="Gilna P."/>
            <person name="Kiss H."/>
            <person name="Schmutz J."/>
            <person name="Larimer F."/>
            <person name="Land M."/>
            <person name="Kyrpides N."/>
            <person name="Anderson I."/>
            <person name="Sanford R.A."/>
            <person name="Ritalahti K.M."/>
            <person name="Thomas H.S."/>
            <person name="Kirby J.R."/>
            <person name="Zhulin I.B."/>
            <person name="Loeffler F.E."/>
            <person name="Richardson P."/>
        </authorList>
    </citation>
    <scope>NUCLEOTIDE SEQUENCE [LARGE SCALE GENOMIC DNA]</scope>
    <source>
        <strain>2CP-C</strain>
    </source>
</reference>
<proteinExistence type="inferred from homology"/>